<feature type="chain" id="PRO_0000248786" description="Proline--tRNA ligase">
    <location>
        <begin position="1"/>
        <end position="618"/>
    </location>
</feature>
<evidence type="ECO:0000255" key="1">
    <source>
        <dbReference type="HAMAP-Rule" id="MF_01569"/>
    </source>
</evidence>
<proteinExistence type="inferred from homology"/>
<keyword id="KW-0030">Aminoacyl-tRNA synthetase</keyword>
<keyword id="KW-0067">ATP-binding</keyword>
<keyword id="KW-0963">Cytoplasm</keyword>
<keyword id="KW-0436">Ligase</keyword>
<keyword id="KW-0547">Nucleotide-binding</keyword>
<keyword id="KW-0648">Protein biosynthesis</keyword>
<dbReference type="EC" id="6.1.1.15" evidence="1"/>
<dbReference type="EMBL" id="CP000262">
    <property type="protein sequence ID" value="ABF38717.1"/>
    <property type="molecule type" value="Genomic_DNA"/>
</dbReference>
<dbReference type="SMR" id="Q1J4L9"/>
<dbReference type="KEGG" id="spi:MGAS10750_Spy1767"/>
<dbReference type="HOGENOM" id="CLU_016739_0_0_9"/>
<dbReference type="Proteomes" id="UP000002434">
    <property type="component" value="Chromosome"/>
</dbReference>
<dbReference type="GO" id="GO:0005829">
    <property type="term" value="C:cytosol"/>
    <property type="evidence" value="ECO:0007669"/>
    <property type="project" value="TreeGrafter"/>
</dbReference>
<dbReference type="GO" id="GO:0002161">
    <property type="term" value="F:aminoacyl-tRNA deacylase activity"/>
    <property type="evidence" value="ECO:0007669"/>
    <property type="project" value="InterPro"/>
</dbReference>
<dbReference type="GO" id="GO:0005524">
    <property type="term" value="F:ATP binding"/>
    <property type="evidence" value="ECO:0007669"/>
    <property type="project" value="UniProtKB-UniRule"/>
</dbReference>
<dbReference type="GO" id="GO:0140096">
    <property type="term" value="F:catalytic activity, acting on a protein"/>
    <property type="evidence" value="ECO:0007669"/>
    <property type="project" value="UniProtKB-ARBA"/>
</dbReference>
<dbReference type="GO" id="GO:0004827">
    <property type="term" value="F:proline-tRNA ligase activity"/>
    <property type="evidence" value="ECO:0007669"/>
    <property type="project" value="UniProtKB-UniRule"/>
</dbReference>
<dbReference type="GO" id="GO:0016740">
    <property type="term" value="F:transferase activity"/>
    <property type="evidence" value="ECO:0007669"/>
    <property type="project" value="UniProtKB-ARBA"/>
</dbReference>
<dbReference type="GO" id="GO:0006433">
    <property type="term" value="P:prolyl-tRNA aminoacylation"/>
    <property type="evidence" value="ECO:0007669"/>
    <property type="project" value="UniProtKB-UniRule"/>
</dbReference>
<dbReference type="CDD" id="cd04334">
    <property type="entry name" value="ProRS-INS"/>
    <property type="match status" value="1"/>
</dbReference>
<dbReference type="CDD" id="cd00861">
    <property type="entry name" value="ProRS_anticodon_short"/>
    <property type="match status" value="1"/>
</dbReference>
<dbReference type="FunFam" id="3.40.50.800:FF:000011">
    <property type="entry name" value="Proline--tRNA ligase"/>
    <property type="match status" value="1"/>
</dbReference>
<dbReference type="Gene3D" id="3.40.50.800">
    <property type="entry name" value="Anticodon-binding domain"/>
    <property type="match status" value="1"/>
</dbReference>
<dbReference type="Gene3D" id="3.30.930.10">
    <property type="entry name" value="Bira Bifunctional Protein, Domain 2"/>
    <property type="match status" value="2"/>
</dbReference>
<dbReference type="Gene3D" id="3.90.960.10">
    <property type="entry name" value="YbaK/aminoacyl-tRNA synthetase-associated domain"/>
    <property type="match status" value="1"/>
</dbReference>
<dbReference type="HAMAP" id="MF_01569">
    <property type="entry name" value="Pro_tRNA_synth_type1"/>
    <property type="match status" value="1"/>
</dbReference>
<dbReference type="InterPro" id="IPR002314">
    <property type="entry name" value="aa-tRNA-synt_IIb"/>
</dbReference>
<dbReference type="InterPro" id="IPR006195">
    <property type="entry name" value="aa-tRNA-synth_II"/>
</dbReference>
<dbReference type="InterPro" id="IPR045864">
    <property type="entry name" value="aa-tRNA-synth_II/BPL/LPL"/>
</dbReference>
<dbReference type="InterPro" id="IPR004154">
    <property type="entry name" value="Anticodon-bd"/>
</dbReference>
<dbReference type="InterPro" id="IPR036621">
    <property type="entry name" value="Anticodon-bd_dom_sf"/>
</dbReference>
<dbReference type="InterPro" id="IPR002316">
    <property type="entry name" value="Pro-tRNA-ligase_IIa"/>
</dbReference>
<dbReference type="InterPro" id="IPR004500">
    <property type="entry name" value="Pro-tRNA-synth_IIa_bac-type"/>
</dbReference>
<dbReference type="InterPro" id="IPR023717">
    <property type="entry name" value="Pro-tRNA-Synthase_IIa_type1"/>
</dbReference>
<dbReference type="InterPro" id="IPR050062">
    <property type="entry name" value="Pro-tRNA_synthetase"/>
</dbReference>
<dbReference type="InterPro" id="IPR044140">
    <property type="entry name" value="ProRS_anticodon_short"/>
</dbReference>
<dbReference type="InterPro" id="IPR036754">
    <property type="entry name" value="YbaK/aa-tRNA-synt-asso_dom_sf"/>
</dbReference>
<dbReference type="InterPro" id="IPR007214">
    <property type="entry name" value="YbaK/aa-tRNA-synth-assoc-dom"/>
</dbReference>
<dbReference type="NCBIfam" id="NF006625">
    <property type="entry name" value="PRK09194.1"/>
    <property type="match status" value="1"/>
</dbReference>
<dbReference type="NCBIfam" id="TIGR00409">
    <property type="entry name" value="proS_fam_II"/>
    <property type="match status" value="2"/>
</dbReference>
<dbReference type="PANTHER" id="PTHR42753">
    <property type="entry name" value="MITOCHONDRIAL RIBOSOME PROTEIN L39/PROLYL-TRNA LIGASE FAMILY MEMBER"/>
    <property type="match status" value="1"/>
</dbReference>
<dbReference type="PANTHER" id="PTHR42753:SF2">
    <property type="entry name" value="PROLINE--TRNA LIGASE"/>
    <property type="match status" value="1"/>
</dbReference>
<dbReference type="Pfam" id="PF03129">
    <property type="entry name" value="HGTP_anticodon"/>
    <property type="match status" value="1"/>
</dbReference>
<dbReference type="Pfam" id="PF00587">
    <property type="entry name" value="tRNA-synt_2b"/>
    <property type="match status" value="1"/>
</dbReference>
<dbReference type="Pfam" id="PF04073">
    <property type="entry name" value="tRNA_edit"/>
    <property type="match status" value="1"/>
</dbReference>
<dbReference type="PRINTS" id="PR01046">
    <property type="entry name" value="TRNASYNTHPRO"/>
</dbReference>
<dbReference type="SUPFAM" id="SSF52954">
    <property type="entry name" value="Class II aaRS ABD-related"/>
    <property type="match status" value="1"/>
</dbReference>
<dbReference type="SUPFAM" id="SSF55681">
    <property type="entry name" value="Class II aaRS and biotin synthetases"/>
    <property type="match status" value="1"/>
</dbReference>
<dbReference type="SUPFAM" id="SSF55826">
    <property type="entry name" value="YbaK/ProRS associated domain"/>
    <property type="match status" value="1"/>
</dbReference>
<dbReference type="PROSITE" id="PS50862">
    <property type="entry name" value="AA_TRNA_LIGASE_II"/>
    <property type="match status" value="1"/>
</dbReference>
<comment type="function">
    <text evidence="1">Catalyzes the attachment of proline to tRNA(Pro) in a two-step reaction: proline is first activated by ATP to form Pro-AMP and then transferred to the acceptor end of tRNA(Pro). As ProRS can inadvertently accommodate and process non-cognate amino acids such as alanine and cysteine, to avoid such errors it has two additional distinct editing activities against alanine. One activity is designated as 'pretransfer' editing and involves the tRNA(Pro)-independent hydrolysis of activated Ala-AMP. The other activity is designated 'posttransfer' editing and involves deacylation of mischarged Ala-tRNA(Pro). The misacylated Cys-tRNA(Pro) is not edited by ProRS.</text>
</comment>
<comment type="catalytic activity">
    <reaction evidence="1">
        <text>tRNA(Pro) + L-proline + ATP = L-prolyl-tRNA(Pro) + AMP + diphosphate</text>
        <dbReference type="Rhea" id="RHEA:14305"/>
        <dbReference type="Rhea" id="RHEA-COMP:9700"/>
        <dbReference type="Rhea" id="RHEA-COMP:9702"/>
        <dbReference type="ChEBI" id="CHEBI:30616"/>
        <dbReference type="ChEBI" id="CHEBI:33019"/>
        <dbReference type="ChEBI" id="CHEBI:60039"/>
        <dbReference type="ChEBI" id="CHEBI:78442"/>
        <dbReference type="ChEBI" id="CHEBI:78532"/>
        <dbReference type="ChEBI" id="CHEBI:456215"/>
        <dbReference type="EC" id="6.1.1.15"/>
    </reaction>
</comment>
<comment type="subunit">
    <text evidence="1">Homodimer.</text>
</comment>
<comment type="subcellular location">
    <subcellularLocation>
        <location evidence="1">Cytoplasm</location>
    </subcellularLocation>
</comment>
<comment type="domain">
    <text evidence="1">Consists of three domains: the N-terminal catalytic domain, the editing domain and the C-terminal anticodon-binding domain.</text>
</comment>
<comment type="similarity">
    <text evidence="1">Belongs to the class-II aminoacyl-tRNA synthetase family. ProS type 1 subfamily.</text>
</comment>
<reference key="1">
    <citation type="journal article" date="2006" name="Proc. Natl. Acad. Sci. U.S.A.">
        <title>Molecular genetic anatomy of inter- and intraserotype variation in the human bacterial pathogen group A Streptococcus.</title>
        <authorList>
            <person name="Beres S.B."/>
            <person name="Richter E.W."/>
            <person name="Nagiec M.J."/>
            <person name="Sumby P."/>
            <person name="Porcella S.F."/>
            <person name="DeLeo F.R."/>
            <person name="Musser J.M."/>
        </authorList>
    </citation>
    <scope>NUCLEOTIDE SEQUENCE [LARGE SCALE GENOMIC DNA]</scope>
    <source>
        <strain>MGAS10750</strain>
    </source>
</reference>
<organism>
    <name type="scientific">Streptococcus pyogenes serotype M4 (strain MGAS10750)</name>
    <dbReference type="NCBI Taxonomy" id="370554"/>
    <lineage>
        <taxon>Bacteria</taxon>
        <taxon>Bacillati</taxon>
        <taxon>Bacillota</taxon>
        <taxon>Bacilli</taxon>
        <taxon>Lactobacillales</taxon>
        <taxon>Streptococcaceae</taxon>
        <taxon>Streptococcus</taxon>
    </lineage>
</organism>
<accession>Q1J4L9</accession>
<gene>
    <name evidence="1" type="primary">proS</name>
    <name type="ordered locus">MGAS10750_Spy1767</name>
</gene>
<sequence>MKQSKLLIPTLREMPSDAQVISHALMVRAGYVRQVSAGIYAYLPLANRTIEKFKTIMREEFEKIGAVEMLAPALLTADLWRESGRYETYGEDLYKLKNRDNSDFILGPTHEETFTTLVRDAVKSYKQLPLNLYQIQSKYRDEKRPRNGLLRTREFIMKDGYSFHHNYEDLDVTYEDYRQAYEAIFTRAGLDFKGIIGDGGAMGGKDSQEFMAITPARTDLDRWVVLDKSIASMDDIPKEVLEEIKAELAAWMISGEDTIAYSTESSYAANLEMATNEYKPSSKVAAEDALAEVETPHCKTIDEVAAFLSVDETQTIKTLLFVADNEPVVALLVGNDHINTVKLKNYLAADFLEPASEEEARAFFGAGFGSLGPVNLAQGSRIVADRKVQNLTNAVAGANKDGFHVTGVNPGRDFQAEYVDIREVKEGEMSPDGHGVLQFARGIEVGHIFKLGTRYSDSMGATILDENGRTVPIVMGCYGIGVSRILSAVIEQHARLFVNKTPKGDYRYAWGINFPKELAPFDVHLITVNVKDQVAQDLTAKLEADLMAKGYDVLTDDRNERVGSKFSDSDLIGLPIRVTVGKKAAEGIVEIKIKATGDSIEVNAENLIETLEILTKEH</sequence>
<name>SYP_STRPF</name>
<protein>
    <recommendedName>
        <fullName evidence="1">Proline--tRNA ligase</fullName>
        <ecNumber evidence="1">6.1.1.15</ecNumber>
    </recommendedName>
    <alternativeName>
        <fullName evidence="1">Prolyl-tRNA synthetase</fullName>
        <shortName evidence="1">ProRS</shortName>
    </alternativeName>
</protein>